<dbReference type="EMBL" id="CR859050">
    <property type="protein sequence ID" value="CAH91243.1"/>
    <property type="molecule type" value="mRNA"/>
</dbReference>
<dbReference type="RefSeq" id="NP_001125734.1">
    <property type="nucleotide sequence ID" value="NM_001132262.1"/>
</dbReference>
<dbReference type="SMR" id="Q5RAG7"/>
<dbReference type="FunCoup" id="Q5RAG7">
    <property type="interactions" value="226"/>
</dbReference>
<dbReference type="STRING" id="9601.ENSPPYP00000016831"/>
<dbReference type="GlyCosmos" id="Q5RAG7">
    <property type="glycosylation" value="1 site, No reported glycans"/>
</dbReference>
<dbReference type="GeneID" id="100172659"/>
<dbReference type="KEGG" id="pon:100172659"/>
<dbReference type="CTD" id="23657"/>
<dbReference type="eggNOG" id="KOG1287">
    <property type="taxonomic scope" value="Eukaryota"/>
</dbReference>
<dbReference type="InParanoid" id="Q5RAG7"/>
<dbReference type="OrthoDB" id="10062876at2759"/>
<dbReference type="Proteomes" id="UP000001595">
    <property type="component" value="Unplaced"/>
</dbReference>
<dbReference type="GO" id="GO:0031528">
    <property type="term" value="C:microvillus membrane"/>
    <property type="evidence" value="ECO:0007669"/>
    <property type="project" value="UniProtKB-SubCell"/>
</dbReference>
<dbReference type="GO" id="GO:0005886">
    <property type="term" value="C:plasma membrane"/>
    <property type="evidence" value="ECO:0000250"/>
    <property type="project" value="UniProtKB"/>
</dbReference>
<dbReference type="GO" id="GO:0015327">
    <property type="term" value="F:cystine:glutamate antiporter activity"/>
    <property type="evidence" value="ECO:0000250"/>
    <property type="project" value="UniProtKB"/>
</dbReference>
<dbReference type="GO" id="GO:0140926">
    <property type="term" value="F:L-kynurenine transmembrane transporter activity"/>
    <property type="evidence" value="ECO:0000250"/>
    <property type="project" value="UniProtKB"/>
</dbReference>
<dbReference type="GO" id="GO:0015811">
    <property type="term" value="P:L-cystine transport"/>
    <property type="evidence" value="ECO:0000250"/>
    <property type="project" value="UniProtKB"/>
</dbReference>
<dbReference type="GO" id="GO:0015813">
    <property type="term" value="P:L-glutamate transmembrane transport"/>
    <property type="evidence" value="ECO:0000250"/>
    <property type="project" value="UniProtKB"/>
</dbReference>
<dbReference type="GO" id="GO:0140924">
    <property type="term" value="P:L-kynurenine transmembrane transport"/>
    <property type="evidence" value="ECO:0000250"/>
    <property type="project" value="UniProtKB"/>
</dbReference>
<dbReference type="GO" id="GO:0110076">
    <property type="term" value="P:negative regulation of ferroptosis"/>
    <property type="evidence" value="ECO:0000250"/>
    <property type="project" value="UniProtKB"/>
</dbReference>
<dbReference type="FunFam" id="1.20.1740.10:FF:000027">
    <property type="entry name" value="cystine/glutamate transporter isoform X1"/>
    <property type="match status" value="1"/>
</dbReference>
<dbReference type="Gene3D" id="1.20.1740.10">
    <property type="entry name" value="Amino acid/polyamine transporter I"/>
    <property type="match status" value="1"/>
</dbReference>
<dbReference type="InterPro" id="IPR002293">
    <property type="entry name" value="AA/rel_permease1"/>
</dbReference>
<dbReference type="InterPro" id="IPR050598">
    <property type="entry name" value="AminoAcid_Transporter"/>
</dbReference>
<dbReference type="InterPro" id="IPR004760">
    <property type="entry name" value="L_AA_transporter"/>
</dbReference>
<dbReference type="NCBIfam" id="TIGR00911">
    <property type="entry name" value="2A0308"/>
    <property type="match status" value="1"/>
</dbReference>
<dbReference type="PANTHER" id="PTHR11785">
    <property type="entry name" value="AMINO ACID TRANSPORTER"/>
    <property type="match status" value="1"/>
</dbReference>
<dbReference type="PANTHER" id="PTHR11785:SF323">
    <property type="entry name" value="CYSTINE_GLUTAMATE TRANSPORTER"/>
    <property type="match status" value="1"/>
</dbReference>
<dbReference type="Pfam" id="PF13520">
    <property type="entry name" value="AA_permease_2"/>
    <property type="match status" value="1"/>
</dbReference>
<dbReference type="PIRSF" id="PIRSF006060">
    <property type="entry name" value="AA_transporter"/>
    <property type="match status" value="1"/>
</dbReference>
<proteinExistence type="evidence at transcript level"/>
<keyword id="KW-0029">Amino-acid transport</keyword>
<keyword id="KW-1003">Cell membrane</keyword>
<keyword id="KW-0966">Cell projection</keyword>
<keyword id="KW-1015">Disulfide bond</keyword>
<keyword id="KW-0325">Glycoprotein</keyword>
<keyword id="KW-0472">Membrane</keyword>
<keyword id="KW-0597">Phosphoprotein</keyword>
<keyword id="KW-1185">Reference proteome</keyword>
<keyword id="KW-0812">Transmembrane</keyword>
<keyword id="KW-1133">Transmembrane helix</keyword>
<keyword id="KW-0813">Transport</keyword>
<reference key="1">
    <citation type="submission" date="2004-11" db="EMBL/GenBank/DDBJ databases">
        <authorList>
            <consortium name="The German cDNA consortium"/>
        </authorList>
    </citation>
    <scope>NUCLEOTIDE SEQUENCE [LARGE SCALE MRNA]</scope>
    <source>
        <tissue>Heart</tissue>
    </source>
</reference>
<organism>
    <name type="scientific">Pongo abelii</name>
    <name type="common">Sumatran orangutan</name>
    <name type="synonym">Pongo pygmaeus abelii</name>
    <dbReference type="NCBI Taxonomy" id="9601"/>
    <lineage>
        <taxon>Eukaryota</taxon>
        <taxon>Metazoa</taxon>
        <taxon>Chordata</taxon>
        <taxon>Craniata</taxon>
        <taxon>Vertebrata</taxon>
        <taxon>Euteleostomi</taxon>
        <taxon>Mammalia</taxon>
        <taxon>Eutheria</taxon>
        <taxon>Euarchontoglires</taxon>
        <taxon>Primates</taxon>
        <taxon>Haplorrhini</taxon>
        <taxon>Catarrhini</taxon>
        <taxon>Hominidae</taxon>
        <taxon>Pongo</taxon>
    </lineage>
</organism>
<protein>
    <recommendedName>
        <fullName evidence="1">Cystine/glutamate transporter</fullName>
    </recommendedName>
    <alternativeName>
        <fullName>Amino acid transport system xc-</fullName>
    </alternativeName>
    <alternativeName>
        <fullName>Solute carrier family 7 member 11</fullName>
    </alternativeName>
    <alternativeName>
        <fullName evidence="1">xCT</fullName>
    </alternativeName>
</protein>
<evidence type="ECO:0000250" key="1">
    <source>
        <dbReference type="UniProtKB" id="Q9UPY5"/>
    </source>
</evidence>
<evidence type="ECO:0000250" key="2">
    <source>
        <dbReference type="UniProtKB" id="Q9WTR6"/>
    </source>
</evidence>
<evidence type="ECO:0000255" key="3"/>
<evidence type="ECO:0000305" key="4"/>
<name>XCT_PONAB</name>
<accession>Q5RAG7</accession>
<comment type="function">
    <text evidence="1 2">Heterodimer with SLC3A2, that functions as an antiporter by mediating the exchange of extracellular anionic L-cystine and intracellular L-glutamate across the cellular plasma membrane (By similarity). Provides L-cystine for the maintenance of the redox balance between extracellular L-cystine and L-cysteine and for the maintenance of the intracellular levels of glutathione that is essential for cells protection from oxidative stress (By similarity). The transport is sodium-independent, electroneutral with a stoichiometry of 1:1, and is drove by the high intracellular concentration of L-glutamate and the intracellular reduction of L-cystine. In addition, mediates the import of L-kynurenine leading to anti-ferroptotic signaling propagation required to maintain L-cystine and glutathione homeostasis. Moreover, mediates N-acetyl-L-cysteine uptake into the placenta leading to subsequently down-regulation of pathways associated with oxidative stress, inflammation and apoptosis. In vitro can also transport L-aspartate (By similarity). May participate in astrocyte and meningeal cell proliferation during development and can provide neuroprotection by promoting glutathione synthesis and delivery from non-neuronal cells such as astrocytes and meningeal cells to immature neurons. Controls the production of pheomelanin pigment directly (By similarity).</text>
</comment>
<comment type="catalytic activity">
    <reaction evidence="1">
        <text>L-cystine(out) + L-glutamate(in) = L-cystine(in) + L-glutamate(out)</text>
        <dbReference type="Rhea" id="RHEA:70995"/>
        <dbReference type="ChEBI" id="CHEBI:29985"/>
        <dbReference type="ChEBI" id="CHEBI:35491"/>
    </reaction>
</comment>
<comment type="catalytic activity">
    <reaction evidence="1">
        <text>an L-alpha-amino acid(in) + L-kynurenine(out) = an L-alpha-amino acid(out) + L-kynurenine(in)</text>
        <dbReference type="Rhea" id="RHEA:71191"/>
        <dbReference type="ChEBI" id="CHEBI:57959"/>
        <dbReference type="ChEBI" id="CHEBI:59869"/>
    </reaction>
</comment>
<comment type="catalytic activity">
    <reaction evidence="1">
        <text>N-acetyl-L-cysteine(out) + L-glutamate(in) = N-acetyl-L-cysteine(in) + L-glutamate(out)</text>
        <dbReference type="Rhea" id="RHEA:74567"/>
        <dbReference type="ChEBI" id="CHEBI:29985"/>
        <dbReference type="ChEBI" id="CHEBI:78236"/>
    </reaction>
</comment>
<comment type="subunit">
    <text evidence="1">Disulfide-linked heterodimer with the amino acid transport protein SLC3A2/4F2hc; this interaction mediates cell membrane localization.</text>
</comment>
<comment type="subcellular location">
    <subcellularLocation>
        <location evidence="1">Cell membrane</location>
        <topology evidence="1">Multi-pass membrane protein</topology>
    </subcellularLocation>
    <subcellularLocation>
        <location evidence="1">Cell projection</location>
        <location evidence="1">Microvillus membrane</location>
        <topology evidence="3">Multi-pass membrane protein</topology>
    </subcellularLocation>
    <text evidence="1">Localized to the microvillous membrane of the placental syncytiotrophoblast.</text>
</comment>
<comment type="similarity">
    <text evidence="4">Belongs to the amino acid-polyamine-organocation (APC) superfamily. L-type amino acid transporter (LAT) (TC 2.A.3.8) family.</text>
</comment>
<sequence>MVRKPVVSTISKGGYLQGNVNGRLPSLGNKEPPGQEKVQLKRKVTLLRGVSIIIGTIIGAGIFISPKGVLQNTGSVGMSLTIWTVCGVLSLFGALSYAELGTTIKKSGGHYTYILEVFGPLPAFVRVWVELLIIRPAATAVISLAFGRYILEPFFIQCEIPELAIKLITAVGITVVMVLNSMSVSWSARIQIFLTFCKLTAILIIIVPGVMQLIKGQTQNFKDAFSGRDSSITRLPLAFYYGMYAYAGWFYLNFVTEEVENPEKTIPLAICISMAIVTIGYVLTNVAYFTTINAEELLLSNAVAVTFSERLLGNFSLAVPIFVALSCFGSMNGGVFAVSRLFYVASREGHLPEILSMIHVRKHTPLPAVIVLHPLTMIMLFSGDLDSLLNFLSFARWLFIGLAVAGLIYLRYKCPDMHRPFKVPLFIPALFSFTCLFMVALSLYSDPFSTGIGSVITLTGVPAYYLFIIWDKKPRWFRIMSEKITRTLQIILEVVPEEDKL</sequence>
<feature type="chain" id="PRO_0000317479" description="Cystine/glutamate transporter">
    <location>
        <begin position="1"/>
        <end position="501"/>
    </location>
</feature>
<feature type="topological domain" description="Cytoplasmic" evidence="4">
    <location>
        <begin position="1"/>
        <end position="43"/>
    </location>
</feature>
<feature type="transmembrane region" description="Helical" evidence="1">
    <location>
        <begin position="44"/>
        <end position="64"/>
    </location>
</feature>
<feature type="topological domain" description="Extracellular" evidence="4">
    <location>
        <begin position="65"/>
        <end position="74"/>
    </location>
</feature>
<feature type="transmembrane region" description="Helical" evidence="1">
    <location>
        <begin position="75"/>
        <end position="95"/>
    </location>
</feature>
<feature type="topological domain" description="Cytoplasmic" evidence="4">
    <location>
        <begin position="96"/>
        <end position="101"/>
    </location>
</feature>
<feature type="intramembrane region" evidence="1">
    <location>
        <begin position="102"/>
        <end position="116"/>
    </location>
</feature>
<feature type="topological domain" description="Cytoplasmic" evidence="4">
    <location>
        <begin position="117"/>
        <end position="130"/>
    </location>
</feature>
<feature type="transmembrane region" description="Helical" evidence="1">
    <location>
        <begin position="131"/>
        <end position="150"/>
    </location>
</feature>
<feature type="topological domain" description="Extracellular" evidence="4">
    <location>
        <begin position="151"/>
        <end position="163"/>
    </location>
</feature>
<feature type="transmembrane region" description="Helical" evidence="1">
    <location>
        <begin position="164"/>
        <end position="179"/>
    </location>
</feature>
<feature type="topological domain" description="Cytoplasmic" evidence="4">
    <location>
        <begin position="180"/>
        <end position="193"/>
    </location>
</feature>
<feature type="transmembrane region" description="Helical" evidence="1">
    <location>
        <begin position="194"/>
        <end position="210"/>
    </location>
</feature>
<feature type="topological domain" description="Extracellular" evidence="4">
    <location>
        <begin position="211"/>
        <end position="234"/>
    </location>
</feature>
<feature type="transmembrane region" description="Helical" evidence="1">
    <location>
        <begin position="235"/>
        <end position="255"/>
    </location>
</feature>
<feature type="topological domain" description="Cytoplasmic" evidence="4">
    <location>
        <begin position="256"/>
        <end position="265"/>
    </location>
</feature>
<feature type="transmembrane region" description="Helical" evidence="1">
    <location>
        <begin position="266"/>
        <end position="286"/>
    </location>
</feature>
<feature type="topological domain" description="Extracellular" evidence="4">
    <location>
        <begin position="287"/>
        <end position="317"/>
    </location>
</feature>
<feature type="transmembrane region" description="Helical" evidence="1">
    <location>
        <begin position="318"/>
        <end position="338"/>
    </location>
</feature>
<feature type="topological domain" description="Cytoplasmic" evidence="4">
    <location>
        <begin position="339"/>
        <end position="364"/>
    </location>
</feature>
<feature type="transmembrane region" description="Helical" evidence="1">
    <location>
        <begin position="365"/>
        <end position="385"/>
    </location>
</feature>
<feature type="topological domain" description="Extracellular" evidence="4">
    <location>
        <begin position="386"/>
        <end position="387"/>
    </location>
</feature>
<feature type="transmembrane region" description="Helical" evidence="1">
    <location>
        <begin position="388"/>
        <end position="408"/>
    </location>
</feature>
<feature type="topological domain" description="Cytoplasmic" evidence="4">
    <location>
        <begin position="409"/>
        <end position="422"/>
    </location>
</feature>
<feature type="transmembrane region" description="Helical" evidence="1">
    <location>
        <begin position="423"/>
        <end position="443"/>
    </location>
</feature>
<feature type="topological domain" description="Extracellular" evidence="4">
    <location>
        <begin position="444"/>
        <end position="449"/>
    </location>
</feature>
<feature type="transmembrane region" description="Helical" evidence="1">
    <location>
        <begin position="450"/>
        <end position="470"/>
    </location>
</feature>
<feature type="topological domain" description="Cytoplasmic" evidence="4">
    <location>
        <begin position="471"/>
        <end position="501"/>
    </location>
</feature>
<feature type="binding site" evidence="1">
    <location>
        <position position="135"/>
    </location>
    <ligand>
        <name>L-glutamate</name>
        <dbReference type="ChEBI" id="CHEBI:29985"/>
    </ligand>
</feature>
<feature type="binding site" evidence="1">
    <location>
        <position position="244"/>
    </location>
    <ligand>
        <name>L-glutamate</name>
        <dbReference type="ChEBI" id="CHEBI:29985"/>
    </ligand>
</feature>
<feature type="modified residue" description="Phosphoserine" evidence="1">
    <location>
        <position position="26"/>
    </location>
</feature>
<feature type="glycosylation site" description="N-linked (GlcNAc...) asparagine" evidence="3">
    <location>
        <position position="314"/>
    </location>
</feature>
<feature type="disulfide bond" description="Interchain (with C-210 in SLC3A2)" evidence="1">
    <location>
        <position position="158"/>
    </location>
</feature>
<gene>
    <name evidence="1" type="primary">SLC7A11</name>
</gene>